<gene>
    <name evidence="1" type="primary">purA</name>
    <name type="ordered locus">MSMEG_0759</name>
    <name type="ordered locus">MSMEI_0743</name>
</gene>
<dbReference type="EC" id="6.3.4.4" evidence="1"/>
<dbReference type="EMBL" id="CP000480">
    <property type="protein sequence ID" value="ABK74908.1"/>
    <property type="molecule type" value="Genomic_DNA"/>
</dbReference>
<dbReference type="EMBL" id="CP001663">
    <property type="protein sequence ID" value="AFP37223.1"/>
    <property type="molecule type" value="Genomic_DNA"/>
</dbReference>
<dbReference type="RefSeq" id="WP_011727173.1">
    <property type="nucleotide sequence ID" value="NZ_SIJM01000036.1"/>
</dbReference>
<dbReference type="RefSeq" id="YP_885165.1">
    <property type="nucleotide sequence ID" value="NC_008596.1"/>
</dbReference>
<dbReference type="SMR" id="A0QQH7"/>
<dbReference type="STRING" id="246196.MSMEG_0759"/>
<dbReference type="PaxDb" id="246196-MSMEI_0743"/>
<dbReference type="KEGG" id="msb:LJ00_03770"/>
<dbReference type="KEGG" id="msg:MSMEI_0743"/>
<dbReference type="KEGG" id="msm:MSMEG_0759"/>
<dbReference type="PATRIC" id="fig|246196.19.peg.755"/>
<dbReference type="eggNOG" id="COG0104">
    <property type="taxonomic scope" value="Bacteria"/>
</dbReference>
<dbReference type="OrthoDB" id="9807553at2"/>
<dbReference type="UniPathway" id="UPA00075">
    <property type="reaction ID" value="UER00335"/>
</dbReference>
<dbReference type="Proteomes" id="UP000000757">
    <property type="component" value="Chromosome"/>
</dbReference>
<dbReference type="Proteomes" id="UP000006158">
    <property type="component" value="Chromosome"/>
</dbReference>
<dbReference type="GO" id="GO:0005737">
    <property type="term" value="C:cytoplasm"/>
    <property type="evidence" value="ECO:0007669"/>
    <property type="project" value="UniProtKB-SubCell"/>
</dbReference>
<dbReference type="GO" id="GO:0004019">
    <property type="term" value="F:adenylosuccinate synthase activity"/>
    <property type="evidence" value="ECO:0007669"/>
    <property type="project" value="UniProtKB-UniRule"/>
</dbReference>
<dbReference type="GO" id="GO:0005525">
    <property type="term" value="F:GTP binding"/>
    <property type="evidence" value="ECO:0007669"/>
    <property type="project" value="UniProtKB-UniRule"/>
</dbReference>
<dbReference type="GO" id="GO:0000287">
    <property type="term" value="F:magnesium ion binding"/>
    <property type="evidence" value="ECO:0007669"/>
    <property type="project" value="UniProtKB-UniRule"/>
</dbReference>
<dbReference type="GO" id="GO:0044208">
    <property type="term" value="P:'de novo' AMP biosynthetic process"/>
    <property type="evidence" value="ECO:0007669"/>
    <property type="project" value="UniProtKB-UniRule"/>
</dbReference>
<dbReference type="GO" id="GO:0046040">
    <property type="term" value="P:IMP metabolic process"/>
    <property type="evidence" value="ECO:0007669"/>
    <property type="project" value="TreeGrafter"/>
</dbReference>
<dbReference type="CDD" id="cd03108">
    <property type="entry name" value="AdSS"/>
    <property type="match status" value="1"/>
</dbReference>
<dbReference type="FunFam" id="1.10.300.10:FF:000001">
    <property type="entry name" value="Adenylosuccinate synthetase"/>
    <property type="match status" value="1"/>
</dbReference>
<dbReference type="FunFam" id="3.90.170.10:FF:000001">
    <property type="entry name" value="Adenylosuccinate synthetase"/>
    <property type="match status" value="1"/>
</dbReference>
<dbReference type="Gene3D" id="3.40.440.10">
    <property type="entry name" value="Adenylosuccinate Synthetase, subunit A, domain 1"/>
    <property type="match status" value="1"/>
</dbReference>
<dbReference type="Gene3D" id="1.10.300.10">
    <property type="entry name" value="Adenylosuccinate Synthetase, subunit A, domain 2"/>
    <property type="match status" value="1"/>
</dbReference>
<dbReference type="Gene3D" id="3.90.170.10">
    <property type="entry name" value="Adenylosuccinate Synthetase, subunit A, domain 3"/>
    <property type="match status" value="1"/>
</dbReference>
<dbReference type="HAMAP" id="MF_00011">
    <property type="entry name" value="Adenylosucc_synth"/>
    <property type="match status" value="1"/>
</dbReference>
<dbReference type="InterPro" id="IPR018220">
    <property type="entry name" value="Adenylosuccin_syn_GTP-bd"/>
</dbReference>
<dbReference type="InterPro" id="IPR033128">
    <property type="entry name" value="Adenylosuccin_syn_Lys_AS"/>
</dbReference>
<dbReference type="InterPro" id="IPR042109">
    <property type="entry name" value="Adenylosuccinate_synth_dom1"/>
</dbReference>
<dbReference type="InterPro" id="IPR042110">
    <property type="entry name" value="Adenylosuccinate_synth_dom2"/>
</dbReference>
<dbReference type="InterPro" id="IPR042111">
    <property type="entry name" value="Adenylosuccinate_synth_dom3"/>
</dbReference>
<dbReference type="InterPro" id="IPR001114">
    <property type="entry name" value="Adenylosuccinate_synthetase"/>
</dbReference>
<dbReference type="InterPro" id="IPR027417">
    <property type="entry name" value="P-loop_NTPase"/>
</dbReference>
<dbReference type="NCBIfam" id="NF002223">
    <property type="entry name" value="PRK01117.1"/>
    <property type="match status" value="1"/>
</dbReference>
<dbReference type="NCBIfam" id="TIGR00184">
    <property type="entry name" value="purA"/>
    <property type="match status" value="1"/>
</dbReference>
<dbReference type="PANTHER" id="PTHR11846">
    <property type="entry name" value="ADENYLOSUCCINATE SYNTHETASE"/>
    <property type="match status" value="1"/>
</dbReference>
<dbReference type="PANTHER" id="PTHR11846:SF0">
    <property type="entry name" value="ADENYLOSUCCINATE SYNTHETASE"/>
    <property type="match status" value="1"/>
</dbReference>
<dbReference type="Pfam" id="PF00709">
    <property type="entry name" value="Adenylsucc_synt"/>
    <property type="match status" value="1"/>
</dbReference>
<dbReference type="SMART" id="SM00788">
    <property type="entry name" value="Adenylsucc_synt"/>
    <property type="match status" value="1"/>
</dbReference>
<dbReference type="SUPFAM" id="SSF52540">
    <property type="entry name" value="P-loop containing nucleoside triphosphate hydrolases"/>
    <property type="match status" value="1"/>
</dbReference>
<dbReference type="PROSITE" id="PS01266">
    <property type="entry name" value="ADENYLOSUCCIN_SYN_1"/>
    <property type="match status" value="1"/>
</dbReference>
<dbReference type="PROSITE" id="PS00513">
    <property type="entry name" value="ADENYLOSUCCIN_SYN_2"/>
    <property type="match status" value="1"/>
</dbReference>
<proteinExistence type="evidence at protein level"/>
<keyword id="KW-0963">Cytoplasm</keyword>
<keyword id="KW-0342">GTP-binding</keyword>
<keyword id="KW-1017">Isopeptide bond</keyword>
<keyword id="KW-0436">Ligase</keyword>
<keyword id="KW-0460">Magnesium</keyword>
<keyword id="KW-0479">Metal-binding</keyword>
<keyword id="KW-0547">Nucleotide-binding</keyword>
<keyword id="KW-0658">Purine biosynthesis</keyword>
<keyword id="KW-1185">Reference proteome</keyword>
<keyword id="KW-0832">Ubl conjugation</keyword>
<organism>
    <name type="scientific">Mycolicibacterium smegmatis (strain ATCC 700084 / mc(2)155)</name>
    <name type="common">Mycobacterium smegmatis</name>
    <dbReference type="NCBI Taxonomy" id="246196"/>
    <lineage>
        <taxon>Bacteria</taxon>
        <taxon>Bacillati</taxon>
        <taxon>Actinomycetota</taxon>
        <taxon>Actinomycetes</taxon>
        <taxon>Mycobacteriales</taxon>
        <taxon>Mycobacteriaceae</taxon>
        <taxon>Mycolicibacterium</taxon>
    </lineage>
</organism>
<reference key="1">
    <citation type="submission" date="2006-10" db="EMBL/GenBank/DDBJ databases">
        <authorList>
            <person name="Fleischmann R.D."/>
            <person name="Dodson R.J."/>
            <person name="Haft D.H."/>
            <person name="Merkel J.S."/>
            <person name="Nelson W.C."/>
            <person name="Fraser C.M."/>
        </authorList>
    </citation>
    <scope>NUCLEOTIDE SEQUENCE [LARGE SCALE GENOMIC DNA]</scope>
    <source>
        <strain>ATCC 700084 / mc(2)155</strain>
    </source>
</reference>
<reference key="2">
    <citation type="journal article" date="2007" name="Genome Biol.">
        <title>Interrupted coding sequences in Mycobacterium smegmatis: authentic mutations or sequencing errors?</title>
        <authorList>
            <person name="Deshayes C."/>
            <person name="Perrodou E."/>
            <person name="Gallien S."/>
            <person name="Euphrasie D."/>
            <person name="Schaeffer C."/>
            <person name="Van-Dorsselaer A."/>
            <person name="Poch O."/>
            <person name="Lecompte O."/>
            <person name="Reyrat J.-M."/>
        </authorList>
    </citation>
    <scope>NUCLEOTIDE SEQUENCE [LARGE SCALE GENOMIC DNA]</scope>
    <source>
        <strain>ATCC 700084 / mc(2)155</strain>
    </source>
</reference>
<reference key="3">
    <citation type="journal article" date="2009" name="Genome Res.">
        <title>Ortho-proteogenomics: multiple proteomes investigation through orthology and a new MS-based protocol.</title>
        <authorList>
            <person name="Gallien S."/>
            <person name="Perrodou E."/>
            <person name="Carapito C."/>
            <person name="Deshayes C."/>
            <person name="Reyrat J.-M."/>
            <person name="Van Dorsselaer A."/>
            <person name="Poch O."/>
            <person name="Schaeffer C."/>
            <person name="Lecompte O."/>
        </authorList>
    </citation>
    <scope>NUCLEOTIDE SEQUENCE [LARGE SCALE GENOMIC DNA]</scope>
    <scope>IDENTIFICATION BY MASS SPECTROMETRY [LARGE SCALE ANALYSIS]</scope>
    <scope>CLEAVAGE OF INITIATOR METHIONINE</scope>
    <source>
        <strain>ATCC 700084 / mc(2)155</strain>
    </source>
</reference>
<reference key="4">
    <citation type="journal article" date="2010" name="Mol. Biosyst.">
        <title>Expansion of the mycobacterial 'PUPylome'.</title>
        <authorList>
            <person name="Watrous J."/>
            <person name="Burns K."/>
            <person name="Liu W.T."/>
            <person name="Patel A."/>
            <person name="Hook V."/>
            <person name="Bafna V."/>
            <person name="Barry C.E. III"/>
            <person name="Bark S."/>
            <person name="Dorrestein P.C."/>
        </authorList>
    </citation>
    <scope>PUPYLATION AT LYS-292</scope>
    <scope>IDENTIFICATION BY MASS SPECTROMETRY</scope>
</reference>
<evidence type="ECO:0000255" key="1">
    <source>
        <dbReference type="HAMAP-Rule" id="MF_00011"/>
    </source>
</evidence>
<evidence type="ECO:0000269" key="2">
    <source>
    </source>
</evidence>
<evidence type="ECO:0000269" key="3">
    <source>
    </source>
</evidence>
<protein>
    <recommendedName>
        <fullName evidence="1">Adenylosuccinate synthetase</fullName>
        <shortName evidence="1">AMPSase</shortName>
        <shortName evidence="1">AdSS</shortName>
        <ecNumber evidence="1">6.3.4.4</ecNumber>
    </recommendedName>
    <alternativeName>
        <fullName evidence="1">IMP--aspartate ligase</fullName>
    </alternativeName>
</protein>
<comment type="function">
    <text evidence="1">Plays an important role in the de novo pathway of purine nucleotide biosynthesis. Catalyzes the first committed step in the biosynthesis of AMP from IMP.</text>
</comment>
<comment type="catalytic activity">
    <reaction evidence="1">
        <text>IMP + L-aspartate + GTP = N(6)-(1,2-dicarboxyethyl)-AMP + GDP + phosphate + 2 H(+)</text>
        <dbReference type="Rhea" id="RHEA:15753"/>
        <dbReference type="ChEBI" id="CHEBI:15378"/>
        <dbReference type="ChEBI" id="CHEBI:29991"/>
        <dbReference type="ChEBI" id="CHEBI:37565"/>
        <dbReference type="ChEBI" id="CHEBI:43474"/>
        <dbReference type="ChEBI" id="CHEBI:57567"/>
        <dbReference type="ChEBI" id="CHEBI:58053"/>
        <dbReference type="ChEBI" id="CHEBI:58189"/>
        <dbReference type="EC" id="6.3.4.4"/>
    </reaction>
</comment>
<comment type="cofactor">
    <cofactor evidence="1">
        <name>Mg(2+)</name>
        <dbReference type="ChEBI" id="CHEBI:18420"/>
    </cofactor>
    <text evidence="1">Binds 1 Mg(2+) ion per subunit.</text>
</comment>
<comment type="pathway">
    <text evidence="1">Purine metabolism; AMP biosynthesis via de novo pathway; AMP from IMP: step 1/2.</text>
</comment>
<comment type="subunit">
    <text evidence="1">Homodimer.</text>
</comment>
<comment type="subcellular location">
    <subcellularLocation>
        <location evidence="1">Cytoplasm</location>
    </subcellularLocation>
</comment>
<comment type="similarity">
    <text evidence="1">Belongs to the adenylosuccinate synthetase family.</text>
</comment>
<feature type="initiator methionine" description="Removed" evidence="2">
    <location>
        <position position="1"/>
    </location>
</feature>
<feature type="chain" id="PRO_1000000868" description="Adenylosuccinate synthetase">
    <location>
        <begin position="2"/>
        <end position="431"/>
    </location>
</feature>
<feature type="active site" description="Proton acceptor" evidence="1">
    <location>
        <position position="13"/>
    </location>
</feature>
<feature type="active site" description="Proton donor" evidence="1">
    <location>
        <position position="41"/>
    </location>
</feature>
<feature type="binding site" evidence="1">
    <location>
        <begin position="12"/>
        <end position="18"/>
    </location>
    <ligand>
        <name>GTP</name>
        <dbReference type="ChEBI" id="CHEBI:37565"/>
    </ligand>
</feature>
<feature type="binding site" description="in other chain" evidence="1">
    <location>
        <begin position="13"/>
        <end position="16"/>
    </location>
    <ligand>
        <name>IMP</name>
        <dbReference type="ChEBI" id="CHEBI:58053"/>
        <note>ligand shared between dimeric partners</note>
    </ligand>
</feature>
<feature type="binding site" evidence="1">
    <location>
        <position position="13"/>
    </location>
    <ligand>
        <name>Mg(2+)</name>
        <dbReference type="ChEBI" id="CHEBI:18420"/>
    </ligand>
</feature>
<feature type="binding site" description="in other chain" evidence="1">
    <location>
        <begin position="38"/>
        <end position="41"/>
    </location>
    <ligand>
        <name>IMP</name>
        <dbReference type="ChEBI" id="CHEBI:58053"/>
        <note>ligand shared between dimeric partners</note>
    </ligand>
</feature>
<feature type="binding site" evidence="1">
    <location>
        <begin position="40"/>
        <end position="42"/>
    </location>
    <ligand>
        <name>GTP</name>
        <dbReference type="ChEBI" id="CHEBI:37565"/>
    </ligand>
</feature>
<feature type="binding site" evidence="1">
    <location>
        <position position="40"/>
    </location>
    <ligand>
        <name>Mg(2+)</name>
        <dbReference type="ChEBI" id="CHEBI:18420"/>
    </ligand>
</feature>
<feature type="binding site" description="in other chain" evidence="1">
    <location>
        <position position="129"/>
    </location>
    <ligand>
        <name>IMP</name>
        <dbReference type="ChEBI" id="CHEBI:58053"/>
        <note>ligand shared between dimeric partners</note>
    </ligand>
</feature>
<feature type="binding site" evidence="1">
    <location>
        <position position="143"/>
    </location>
    <ligand>
        <name>IMP</name>
        <dbReference type="ChEBI" id="CHEBI:58053"/>
        <note>ligand shared between dimeric partners</note>
    </ligand>
</feature>
<feature type="binding site" description="in other chain" evidence="1">
    <location>
        <position position="224"/>
    </location>
    <ligand>
        <name>IMP</name>
        <dbReference type="ChEBI" id="CHEBI:58053"/>
        <note>ligand shared between dimeric partners</note>
    </ligand>
</feature>
<feature type="binding site" description="in other chain" evidence="1">
    <location>
        <position position="239"/>
    </location>
    <ligand>
        <name>IMP</name>
        <dbReference type="ChEBI" id="CHEBI:58053"/>
        <note>ligand shared between dimeric partners</note>
    </ligand>
</feature>
<feature type="binding site" evidence="1">
    <location>
        <begin position="299"/>
        <end position="305"/>
    </location>
    <ligand>
        <name>substrate</name>
    </ligand>
</feature>
<feature type="binding site" description="in other chain" evidence="1">
    <location>
        <position position="303"/>
    </location>
    <ligand>
        <name>IMP</name>
        <dbReference type="ChEBI" id="CHEBI:58053"/>
        <note>ligand shared between dimeric partners</note>
    </ligand>
</feature>
<feature type="binding site" evidence="1">
    <location>
        <position position="305"/>
    </location>
    <ligand>
        <name>GTP</name>
        <dbReference type="ChEBI" id="CHEBI:37565"/>
    </ligand>
</feature>
<feature type="binding site" evidence="1">
    <location>
        <begin position="331"/>
        <end position="333"/>
    </location>
    <ligand>
        <name>GTP</name>
        <dbReference type="ChEBI" id="CHEBI:37565"/>
    </ligand>
</feature>
<feature type="binding site" evidence="1">
    <location>
        <begin position="413"/>
        <end position="415"/>
    </location>
    <ligand>
        <name>GTP</name>
        <dbReference type="ChEBI" id="CHEBI:37565"/>
    </ligand>
</feature>
<feature type="cross-link" description="Isoglutamyl lysine isopeptide (Lys-Gln) (interchain with Q-Cter in protein Pup)" evidence="3">
    <location>
        <position position="292"/>
    </location>
</feature>
<name>PURA_MYCS2</name>
<sequence length="431" mass="46339">MPAIVLIGAQWGDEGKGKATDLLGGRVQWVVRYQGGNNAGHTVVLPTGENFALHLIPSGILTPGVTNVIGNGVVVDPGVLLTELKGLEDRGVDTSNLLISADAHLLMPYHVAIDKVVERWAGSKKIGTTGRGIGPCYQDKIARIGIRVADVLDEQVLAEKIEAALEFKNQVLVKIYNRKALEPAEVLENLLEQAEGFKHRIADARLLLNQALENDEAVLLEGSQGTLLDVDHGTYPFVTSSNPTAGGAAVGSGIGPTRITTVLGILKAYTTRVGSGPFPTELFDEHGAYLAKTGGEVGVTTGRARRCGWFDAVIARYATRVNGITDYFLTKLDVLSSLETVPVCVGYTVDGKRVDEMPMTQSDIARAEPVYEELPGWWEDISGAREFEDLPAKARDYVLRLEELAGAYVSCIGVGPGRDQTIVRRDVLAAR</sequence>
<accession>A0QQH7</accession>
<accession>I7FE94</accession>